<accession>P25469</accession>
<keyword id="KW-0007">Acetylation</keyword>
<keyword id="KW-0158">Chromosome</keyword>
<keyword id="KW-0238">DNA-binding</keyword>
<keyword id="KW-0544">Nucleosome core</keyword>
<keyword id="KW-0539">Nucleus</keyword>
<keyword id="KW-1185">Reference proteome</keyword>
<organism>
    <name type="scientific">Solanum lycopersicum</name>
    <name type="common">Tomato</name>
    <name type="synonym">Lycopersicon esculentum</name>
    <dbReference type="NCBI Taxonomy" id="4081"/>
    <lineage>
        <taxon>Eukaryota</taxon>
        <taxon>Viridiplantae</taxon>
        <taxon>Streptophyta</taxon>
        <taxon>Embryophyta</taxon>
        <taxon>Tracheophyta</taxon>
        <taxon>Spermatophyta</taxon>
        <taxon>Magnoliopsida</taxon>
        <taxon>eudicotyledons</taxon>
        <taxon>Gunneridae</taxon>
        <taxon>Pentapetalae</taxon>
        <taxon>asterids</taxon>
        <taxon>lamiids</taxon>
        <taxon>Solanales</taxon>
        <taxon>Solanaceae</taxon>
        <taxon>Solanoideae</taxon>
        <taxon>Solaneae</taxon>
        <taxon>Solanum</taxon>
        <taxon>Solanum subgen. Lycopersicon</taxon>
    </lineage>
</organism>
<proteinExistence type="evidence at transcript level"/>
<reference key="1">
    <citation type="journal article" date="1991" name="Plant Cell">
        <title>Cell-specific expression of plant histone H2A genes.</title>
        <authorList>
            <person name="Koning A.J."/>
            <person name="Tanimoto E.Y."/>
            <person name="Kiehne K."/>
            <person name="Rost T."/>
            <person name="Comai L."/>
        </authorList>
    </citation>
    <scope>NUCLEOTIDE SEQUENCE [MRNA]</scope>
    <scope>DEVELOPMENTAL STAGE</scope>
    <scope>TISSUE SPECIFICITY</scope>
    <source>
        <strain>cv. UC82B</strain>
    </source>
</reference>
<sequence length="146" mass="15335">MDATKTTKGAGGRKGGPRKKSVTKSIKAGLQFPVGRIGRYLKKGRYAQRVGSGAPIYLAAVLEYLAAEVLELAGNAARDNKKSRIIPRHVLLAVRNDEELGKLLAGVTIASGGVLPNINPVLLPKKSAVAEEKSPKAKAGKSPKKA</sequence>
<evidence type="ECO:0000250" key="1"/>
<evidence type="ECO:0000256" key="2">
    <source>
        <dbReference type="SAM" id="MobiDB-lite"/>
    </source>
</evidence>
<evidence type="ECO:0000269" key="3">
    <source>
    </source>
</evidence>
<evidence type="ECO:0000305" key="4"/>
<name>H2A1_SOLLC</name>
<comment type="function">
    <text>Core component of nucleosome. Nucleosomes wrap and compact DNA into chromatin, limiting DNA accessibility to the cellular machineries which require DNA as a template. Histones thereby play a central role in transcription regulation, DNA repair, DNA replication and chromosomal stability. DNA accessibility is regulated via a complex set of post-translational modifications of histones, also called histone code, and nucleosome remodeling.</text>
</comment>
<comment type="subunit">
    <text>The nucleosome is a histone octamer containing two molecules each of H2A, H2B, H3 and H4 assembled in one H3-H4 heterotetramer and two H2A-H2B heterodimers. The octamer wraps approximately 147 bp of DNA.</text>
</comment>
<comment type="subcellular location">
    <subcellularLocation>
        <location>Nucleus</location>
    </subcellularLocation>
    <subcellularLocation>
        <location>Chromosome</location>
    </subcellularLocation>
</comment>
<comment type="tissue specificity">
    <text evidence="3">High expression in meristematic tissues, in cells of the root pericycle and in shoot cortical cells undergoing endoduplication of their DNA.</text>
</comment>
<comment type="developmental stage">
    <text evidence="3">Expressed during fruit development, showing a maximum at 4 to 10 days postanthesis.</text>
</comment>
<comment type="domain">
    <text>Contains one SPKK motif which may interact with the minor groove of A/T-rich DNA sites. Phosphorylation of this motif may regulate DNA binding. This motif is reiterated in both termini of histone H1 and in the N-terminus of sea urchin histones H2B, but its presence in the C-terminus seems to be unique to plant H2A.</text>
</comment>
<comment type="similarity">
    <text evidence="4">Belongs to the histone H2A family.</text>
</comment>
<dbReference type="PIR" id="JQ1182">
    <property type="entry name" value="JQ1182"/>
</dbReference>
<dbReference type="RefSeq" id="NP_001296309.1">
    <property type="nucleotide sequence ID" value="NM_001309380.1"/>
</dbReference>
<dbReference type="SMR" id="P25469"/>
<dbReference type="FunCoup" id="P25469">
    <property type="interactions" value="157"/>
</dbReference>
<dbReference type="STRING" id="4081.P25469"/>
<dbReference type="PaxDb" id="4081-Solyc01g099410.2.1"/>
<dbReference type="EnsemblPlants" id="Solyc01g099410.3.1">
    <property type="protein sequence ID" value="Solyc01g099410.3.1"/>
    <property type="gene ID" value="Solyc01g099410.3"/>
</dbReference>
<dbReference type="GeneID" id="101250163"/>
<dbReference type="Gramene" id="Solyc01g099410.3.1">
    <property type="protein sequence ID" value="Solyc01g099410.3.1"/>
    <property type="gene ID" value="Solyc01g099410.3"/>
</dbReference>
<dbReference type="KEGG" id="sly:101250163"/>
<dbReference type="eggNOG" id="KOG1756">
    <property type="taxonomic scope" value="Eukaryota"/>
</dbReference>
<dbReference type="HOGENOM" id="CLU_062828_1_1_1"/>
<dbReference type="InParanoid" id="P25469"/>
<dbReference type="OMA" id="ARESCKV"/>
<dbReference type="OrthoDB" id="10253031at2759"/>
<dbReference type="PhylomeDB" id="P25469"/>
<dbReference type="Proteomes" id="UP000004994">
    <property type="component" value="Chromosome 1"/>
</dbReference>
<dbReference type="GO" id="GO:0000786">
    <property type="term" value="C:nucleosome"/>
    <property type="evidence" value="ECO:0000318"/>
    <property type="project" value="GO_Central"/>
</dbReference>
<dbReference type="GO" id="GO:0005634">
    <property type="term" value="C:nucleus"/>
    <property type="evidence" value="ECO:0000318"/>
    <property type="project" value="GO_Central"/>
</dbReference>
<dbReference type="GO" id="GO:0003677">
    <property type="term" value="F:DNA binding"/>
    <property type="evidence" value="ECO:0007669"/>
    <property type="project" value="UniProtKB-KW"/>
</dbReference>
<dbReference type="GO" id="GO:0046982">
    <property type="term" value="F:protein heterodimerization activity"/>
    <property type="evidence" value="ECO:0007669"/>
    <property type="project" value="InterPro"/>
</dbReference>
<dbReference type="GO" id="GO:0030527">
    <property type="term" value="F:structural constituent of chromatin"/>
    <property type="evidence" value="ECO:0000318"/>
    <property type="project" value="GO_Central"/>
</dbReference>
<dbReference type="GO" id="GO:0031507">
    <property type="term" value="P:heterochromatin formation"/>
    <property type="evidence" value="ECO:0000318"/>
    <property type="project" value="GO_Central"/>
</dbReference>
<dbReference type="CDD" id="cd00074">
    <property type="entry name" value="HFD_H2A"/>
    <property type="match status" value="1"/>
</dbReference>
<dbReference type="FunFam" id="1.10.20.10:FF:000026">
    <property type="entry name" value="Histone H2A"/>
    <property type="match status" value="1"/>
</dbReference>
<dbReference type="Gene3D" id="1.10.20.10">
    <property type="entry name" value="Histone, subunit A"/>
    <property type="match status" value="1"/>
</dbReference>
<dbReference type="InterPro" id="IPR009072">
    <property type="entry name" value="Histone-fold"/>
</dbReference>
<dbReference type="InterPro" id="IPR002119">
    <property type="entry name" value="Histone_H2A"/>
</dbReference>
<dbReference type="InterPro" id="IPR007125">
    <property type="entry name" value="Histone_H2A/H2B/H3"/>
</dbReference>
<dbReference type="InterPro" id="IPR032454">
    <property type="entry name" value="Histone_H2A_C"/>
</dbReference>
<dbReference type="InterPro" id="IPR032458">
    <property type="entry name" value="Histone_H2A_CS"/>
</dbReference>
<dbReference type="PANTHER" id="PTHR23430">
    <property type="entry name" value="HISTONE H2A"/>
    <property type="match status" value="1"/>
</dbReference>
<dbReference type="Pfam" id="PF00125">
    <property type="entry name" value="Histone"/>
    <property type="match status" value="1"/>
</dbReference>
<dbReference type="Pfam" id="PF16211">
    <property type="entry name" value="Histone_H2A_C"/>
    <property type="match status" value="1"/>
</dbReference>
<dbReference type="PRINTS" id="PR00620">
    <property type="entry name" value="HISTONEH2A"/>
</dbReference>
<dbReference type="SMART" id="SM00414">
    <property type="entry name" value="H2A"/>
    <property type="match status" value="1"/>
</dbReference>
<dbReference type="SUPFAM" id="SSF47113">
    <property type="entry name" value="Histone-fold"/>
    <property type="match status" value="1"/>
</dbReference>
<dbReference type="PROSITE" id="PS00046">
    <property type="entry name" value="HISTONE_H2A"/>
    <property type="match status" value="1"/>
</dbReference>
<protein>
    <recommendedName>
        <fullName>Histone H2A.1</fullName>
    </recommendedName>
    <alternativeName>
        <fullName>LeH2A-1</fullName>
    </alternativeName>
</protein>
<feature type="chain" id="PRO_0000055248" description="Histone H2A.1">
    <location>
        <begin position="1"/>
        <end position="146"/>
    </location>
</feature>
<feature type="region of interest" description="Disordered" evidence="2">
    <location>
        <begin position="1"/>
        <end position="24"/>
    </location>
</feature>
<feature type="short sequence motif" description="SPKK motif">
    <location>
        <begin position="142"/>
        <end position="145"/>
    </location>
</feature>
<feature type="modified residue" description="N-acetylmethionine" evidence="1">
    <location>
        <position position="1"/>
    </location>
</feature>